<keyword id="KW-0961">Cell wall biogenesis/degradation</keyword>
<keyword id="KW-0325">Glycoprotein</keyword>
<keyword id="KW-0328">Glycosyltransferase</keyword>
<keyword id="KW-0472">Membrane</keyword>
<keyword id="KW-1185">Reference proteome</keyword>
<keyword id="KW-0735">Signal-anchor</keyword>
<keyword id="KW-0808">Transferase</keyword>
<keyword id="KW-0812">Transmembrane</keyword>
<keyword id="KW-1133">Transmembrane helix</keyword>
<organism>
    <name type="scientific">Komagataella phaffii (strain GS115 / ATCC 20864)</name>
    <name type="common">Yeast</name>
    <name type="synonym">Pichia pastoris</name>
    <dbReference type="NCBI Taxonomy" id="644223"/>
    <lineage>
        <taxon>Eukaryota</taxon>
        <taxon>Fungi</taxon>
        <taxon>Dikarya</taxon>
        <taxon>Ascomycota</taxon>
        <taxon>Saccharomycotina</taxon>
        <taxon>Pichiomycetes</taxon>
        <taxon>Pichiales</taxon>
        <taxon>Pichiaceae</taxon>
        <taxon>Komagataella</taxon>
    </lineage>
</organism>
<name>BMT4_KOMPG</name>
<accession>C4R7Z8</accession>
<sequence length="503" mass="56665">MKLDTQQISHLLSRQMYHLAPRKKLLIWGGSLGFVLLLLIVASSHQRIRSTILHRTPISTLPVISQEVITADYHPTLLTGFIPTDSDDSDCADFSPSGVIYSTDKLVLHDSLKDIRDSLLKTQYKDLVTLEDEEKMNIDDILKRWYTLSGSSVWIPGMKAHLVVSRVMYLGTNGRSDPLVSFVRVQLFDPDFNELKDIALKFSDKPDGTVIFPYILPVDIPREGSRWLGPEDAKIAVNPETPDDPIVIFNMQNSVNRAMYGFYPFRPENKQVLFSIKDEEPRKKEKNWTPFFVPGSPTTVNFVYDLQKLTILKCSIITGICEKEFVSGDDGQNHGIGIFRGGSNLVPFPTSFTDKDVWVGFPKTHMESCGCSSHIYRPYLMVLVRKGDFYYKAFVSTPLDFGIDVRSWESAESTSCQTAKNVLAVNSISNWDLLDDGLDKDYMTITLSEADVVNSVLRVRGIAKFVDNLTMDDGSTTLSTSNKIDECATTGSKQYCQRYGELH</sequence>
<proteinExistence type="inferred from homology"/>
<protein>
    <recommendedName>
        <fullName>Beta-mannosyltransferase 4</fullName>
        <ecNumber>2.4.1.-</ecNumber>
    </recommendedName>
</protein>
<evidence type="ECO:0000255" key="1"/>
<evidence type="ECO:0000269" key="2">
    <source>
    </source>
</evidence>
<evidence type="ECO:0000269" key="3">
    <source>
    </source>
</evidence>
<evidence type="ECO:0000305" key="4"/>
<gene>
    <name type="primary">BMT4</name>
    <name type="ordered locus">PAS_chr4_0471</name>
</gene>
<comment type="function">
    <text evidence="2 3">Beta-mannosyltransferase involved in cell wall biosynthesis. Responsible for addition of a hexose to the beta-mannose chain. Beta-mannosylation catalyzed by BMT4 masks beta-mannose epitopes recognized by monoclonal antibody (mAb) 5B2 reacting with beta-1,2-linked mannobiose as a minimal epitope.</text>
</comment>
<comment type="subcellular location">
    <subcellularLocation>
        <location evidence="4">Membrane</location>
        <topology evidence="4">Single-pass type II membrane protein</topology>
    </subcellularLocation>
</comment>
<comment type="disruption phenotype">
    <text evidence="2 3">Leads to a size reduction of glycans resistant to alpha-mannosidase treatment.</text>
</comment>
<comment type="similarity">
    <text evidence="4">Belongs to the BMT family.</text>
</comment>
<comment type="sequence caution" evidence="4">
    <conflict type="erroneous initiation">
        <sequence resource="EMBL-CDS" id="CAY71723"/>
    </conflict>
    <text>Truncated N-terminus.</text>
</comment>
<feature type="chain" id="PRO_0000426104" description="Beta-mannosyltransferase 4">
    <location>
        <begin position="1"/>
        <end position="503"/>
    </location>
</feature>
<feature type="topological domain" description="Cytoplasmic" evidence="1">
    <location>
        <begin position="1"/>
        <end position="24"/>
    </location>
</feature>
<feature type="transmembrane region" description="Helical" evidence="1">
    <location>
        <begin position="25"/>
        <end position="45"/>
    </location>
</feature>
<feature type="topological domain" description="Extracellular" evidence="1">
    <location>
        <begin position="46"/>
        <end position="503"/>
    </location>
</feature>
<feature type="glycosylation site" description="N-linked (GlcNAc...) asparagine" evidence="1">
    <location>
        <position position="468"/>
    </location>
</feature>
<dbReference type="EC" id="2.4.1.-"/>
<dbReference type="EMBL" id="FN392322">
    <property type="protein sequence ID" value="CAY71723.1"/>
    <property type="status" value="ALT_INIT"/>
    <property type="molecule type" value="Genomic_DNA"/>
</dbReference>
<dbReference type="RefSeq" id="XP_002493902.1">
    <property type="nucleotide sequence ID" value="XM_002493857.1"/>
</dbReference>
<dbReference type="STRING" id="644223.C4R7Z8"/>
<dbReference type="GlyCosmos" id="C4R7Z8">
    <property type="glycosylation" value="1 site, No reported glycans"/>
</dbReference>
<dbReference type="EnsemblFungi" id="CAY71723">
    <property type="protein sequence ID" value="CAY71723"/>
    <property type="gene ID" value="PAS_chr4_0471"/>
</dbReference>
<dbReference type="GeneID" id="8201418"/>
<dbReference type="KEGG" id="ppa:PAS_chr4_0471"/>
<dbReference type="eggNOG" id="ENOG502QTZG">
    <property type="taxonomic scope" value="Eukaryota"/>
</dbReference>
<dbReference type="HOGENOM" id="CLU_013841_3_0_1"/>
<dbReference type="InParanoid" id="C4R7Z8"/>
<dbReference type="OrthoDB" id="3631276at2759"/>
<dbReference type="Proteomes" id="UP000000314">
    <property type="component" value="Chromosome 4"/>
</dbReference>
<dbReference type="GO" id="GO:0016020">
    <property type="term" value="C:membrane"/>
    <property type="evidence" value="ECO:0007669"/>
    <property type="project" value="UniProtKB-SubCell"/>
</dbReference>
<dbReference type="GO" id="GO:0000030">
    <property type="term" value="F:mannosyltransferase activity"/>
    <property type="evidence" value="ECO:0007669"/>
    <property type="project" value="InterPro"/>
</dbReference>
<dbReference type="GO" id="GO:0071555">
    <property type="term" value="P:cell wall organization"/>
    <property type="evidence" value="ECO:0007669"/>
    <property type="project" value="UniProtKB-KW"/>
</dbReference>
<dbReference type="InterPro" id="IPR021988">
    <property type="entry name" value="BMT1"/>
</dbReference>
<dbReference type="Pfam" id="PF12141">
    <property type="entry name" value="BMT"/>
    <property type="match status" value="2"/>
</dbReference>
<reference key="1">
    <citation type="journal article" date="2009" name="Nat. Biotechnol.">
        <title>Genome sequence of the recombinant protein production host Pichia pastoris.</title>
        <authorList>
            <person name="De Schutter K."/>
            <person name="Lin Y.-C."/>
            <person name="Tiels P."/>
            <person name="Van Hecke A."/>
            <person name="Glinka S."/>
            <person name="Weber-Lehmann J."/>
            <person name="Rouze P."/>
            <person name="Van de Peer Y."/>
            <person name="Callewaert N."/>
        </authorList>
    </citation>
    <scope>NUCLEOTIDE SEQUENCE [LARGE SCALE GENOMIC DNA]</scope>
    <source>
        <strain>GS115 / ATCC 20864</strain>
    </source>
</reference>
<reference key="2">
    <citation type="journal article" date="2008" name="J. Biol. Chem.">
        <title>Identification of a new family of genes involved in beta-1,2-mannosylation of glycans in Pichia pastoris and Candida albicans.</title>
        <authorList>
            <person name="Mille C."/>
            <person name="Bobrowicz P."/>
            <person name="Trinel P.A."/>
            <person name="Li H."/>
            <person name="Maes E."/>
            <person name="Guerardel Y."/>
            <person name="Fradin C."/>
            <person name="Martinez-Esparza M."/>
            <person name="Davidson R.C."/>
            <person name="Janbon G."/>
            <person name="Poulain D."/>
            <person name="Wildt S."/>
        </authorList>
    </citation>
    <scope>IDENTIFICATION</scope>
    <scope>DISRUPTION PHENOTYPE</scope>
    <scope>FUNCTION</scope>
</reference>
<reference key="3">
    <citation type="journal article" date="2011" name="Glycobiology">
        <title>Elimination of beta-mannose glycan structures in Pichia pastoris.</title>
        <authorList>
            <person name="Hopkins D."/>
            <person name="Gomathinayagam S."/>
            <person name="Rittenhour A.M."/>
            <person name="Du M."/>
            <person name="Hoyt E."/>
            <person name="Karaveg K."/>
            <person name="Mitchell T."/>
            <person name="Nett J.H."/>
            <person name="Sharkey N.J."/>
            <person name="Stadheim T.A."/>
            <person name="Li H."/>
            <person name="Hamilton S.R."/>
        </authorList>
    </citation>
    <scope>FUNCTION</scope>
    <scope>DISRUPTION PHENOTYPE</scope>
</reference>